<gene>
    <name evidence="1" type="primary">rplS</name>
    <name type="ordered locus">plu1260</name>
</gene>
<organism>
    <name type="scientific">Photorhabdus laumondii subsp. laumondii (strain DSM 15139 / CIP 105565 / TT01)</name>
    <name type="common">Photorhabdus luminescens subsp. laumondii</name>
    <dbReference type="NCBI Taxonomy" id="243265"/>
    <lineage>
        <taxon>Bacteria</taxon>
        <taxon>Pseudomonadati</taxon>
        <taxon>Pseudomonadota</taxon>
        <taxon>Gammaproteobacteria</taxon>
        <taxon>Enterobacterales</taxon>
        <taxon>Morganellaceae</taxon>
        <taxon>Photorhabdus</taxon>
    </lineage>
</organism>
<reference key="1">
    <citation type="journal article" date="2003" name="Nat. Biotechnol.">
        <title>The genome sequence of the entomopathogenic bacterium Photorhabdus luminescens.</title>
        <authorList>
            <person name="Duchaud E."/>
            <person name="Rusniok C."/>
            <person name="Frangeul L."/>
            <person name="Buchrieser C."/>
            <person name="Givaudan A."/>
            <person name="Taourit S."/>
            <person name="Bocs S."/>
            <person name="Boursaux-Eude C."/>
            <person name="Chandler M."/>
            <person name="Charles J.-F."/>
            <person name="Dassa E."/>
            <person name="Derose R."/>
            <person name="Derzelle S."/>
            <person name="Freyssinet G."/>
            <person name="Gaudriault S."/>
            <person name="Medigue C."/>
            <person name="Lanois A."/>
            <person name="Powell K."/>
            <person name="Siguier P."/>
            <person name="Vincent R."/>
            <person name="Wingate V."/>
            <person name="Zouine M."/>
            <person name="Glaser P."/>
            <person name="Boemare N."/>
            <person name="Danchin A."/>
            <person name="Kunst F."/>
        </authorList>
    </citation>
    <scope>NUCLEOTIDE SEQUENCE [LARGE SCALE GENOMIC DNA]</scope>
    <source>
        <strain>DSM 15139 / CIP 105565 / TT01</strain>
    </source>
</reference>
<feature type="chain" id="PRO_0000163503" description="Large ribosomal subunit protein bL19">
    <location>
        <begin position="1"/>
        <end position="117"/>
    </location>
</feature>
<dbReference type="EMBL" id="BX571863">
    <property type="protein sequence ID" value="CAE13554.1"/>
    <property type="molecule type" value="Genomic_DNA"/>
</dbReference>
<dbReference type="RefSeq" id="WP_011145584.1">
    <property type="nucleotide sequence ID" value="NC_005126.1"/>
</dbReference>
<dbReference type="SMR" id="Q7N798"/>
<dbReference type="STRING" id="243265.plu1260"/>
<dbReference type="GeneID" id="48847534"/>
<dbReference type="KEGG" id="plu:plu1260"/>
<dbReference type="eggNOG" id="COG0335">
    <property type="taxonomic scope" value="Bacteria"/>
</dbReference>
<dbReference type="HOGENOM" id="CLU_103507_2_1_6"/>
<dbReference type="OrthoDB" id="9803541at2"/>
<dbReference type="Proteomes" id="UP000002514">
    <property type="component" value="Chromosome"/>
</dbReference>
<dbReference type="GO" id="GO:0022625">
    <property type="term" value="C:cytosolic large ribosomal subunit"/>
    <property type="evidence" value="ECO:0007669"/>
    <property type="project" value="TreeGrafter"/>
</dbReference>
<dbReference type="GO" id="GO:0003735">
    <property type="term" value="F:structural constituent of ribosome"/>
    <property type="evidence" value="ECO:0007669"/>
    <property type="project" value="InterPro"/>
</dbReference>
<dbReference type="GO" id="GO:0006412">
    <property type="term" value="P:translation"/>
    <property type="evidence" value="ECO:0007669"/>
    <property type="project" value="UniProtKB-UniRule"/>
</dbReference>
<dbReference type="FunFam" id="2.30.30.790:FF:000001">
    <property type="entry name" value="50S ribosomal protein L19"/>
    <property type="match status" value="1"/>
</dbReference>
<dbReference type="Gene3D" id="2.30.30.790">
    <property type="match status" value="1"/>
</dbReference>
<dbReference type="HAMAP" id="MF_00402">
    <property type="entry name" value="Ribosomal_bL19"/>
    <property type="match status" value="1"/>
</dbReference>
<dbReference type="InterPro" id="IPR001857">
    <property type="entry name" value="Ribosomal_bL19"/>
</dbReference>
<dbReference type="InterPro" id="IPR018257">
    <property type="entry name" value="Ribosomal_bL19_CS"/>
</dbReference>
<dbReference type="InterPro" id="IPR038657">
    <property type="entry name" value="Ribosomal_bL19_sf"/>
</dbReference>
<dbReference type="InterPro" id="IPR008991">
    <property type="entry name" value="Translation_prot_SH3-like_sf"/>
</dbReference>
<dbReference type="NCBIfam" id="TIGR01024">
    <property type="entry name" value="rplS_bact"/>
    <property type="match status" value="1"/>
</dbReference>
<dbReference type="PANTHER" id="PTHR15680:SF9">
    <property type="entry name" value="LARGE RIBOSOMAL SUBUNIT PROTEIN BL19M"/>
    <property type="match status" value="1"/>
</dbReference>
<dbReference type="PANTHER" id="PTHR15680">
    <property type="entry name" value="RIBOSOMAL PROTEIN L19"/>
    <property type="match status" value="1"/>
</dbReference>
<dbReference type="Pfam" id="PF01245">
    <property type="entry name" value="Ribosomal_L19"/>
    <property type="match status" value="1"/>
</dbReference>
<dbReference type="PIRSF" id="PIRSF002191">
    <property type="entry name" value="Ribosomal_L19"/>
    <property type="match status" value="1"/>
</dbReference>
<dbReference type="PRINTS" id="PR00061">
    <property type="entry name" value="RIBOSOMALL19"/>
</dbReference>
<dbReference type="SUPFAM" id="SSF50104">
    <property type="entry name" value="Translation proteins SH3-like domain"/>
    <property type="match status" value="1"/>
</dbReference>
<dbReference type="PROSITE" id="PS01015">
    <property type="entry name" value="RIBOSOMAL_L19"/>
    <property type="match status" value="1"/>
</dbReference>
<proteinExistence type="inferred from homology"/>
<comment type="function">
    <text evidence="1">This protein is located at the 30S-50S ribosomal subunit interface and may play a role in the structure and function of the aminoacyl-tRNA binding site.</text>
</comment>
<comment type="similarity">
    <text evidence="1">Belongs to the bacterial ribosomal protein bL19 family.</text>
</comment>
<protein>
    <recommendedName>
        <fullName evidence="1">Large ribosomal subunit protein bL19</fullName>
    </recommendedName>
    <alternativeName>
        <fullName evidence="2">50S ribosomal protein L19</fullName>
    </alternativeName>
</protein>
<evidence type="ECO:0000255" key="1">
    <source>
        <dbReference type="HAMAP-Rule" id="MF_00402"/>
    </source>
</evidence>
<evidence type="ECO:0000305" key="2"/>
<name>RL19_PHOLL</name>
<sequence length="117" mass="13345">MSNIIKQLEQEQMKQDVPSFRPGDSVEVKVWVVEGAKKRLQAFEGVVIAIRNRGLHSAFTVRKVSNGEGVERVFQTHSPVVDSINVKRRGAVRRAKLYYLRERSGKAARIKERLNSK</sequence>
<keyword id="KW-1185">Reference proteome</keyword>
<keyword id="KW-0687">Ribonucleoprotein</keyword>
<keyword id="KW-0689">Ribosomal protein</keyword>
<accession>Q7N798</accession>